<organism>
    <name type="scientific">Neisseria gonorrhoeae (strain ATCC 700825 / FA 1090)</name>
    <dbReference type="NCBI Taxonomy" id="242231"/>
    <lineage>
        <taxon>Bacteria</taxon>
        <taxon>Pseudomonadati</taxon>
        <taxon>Pseudomonadota</taxon>
        <taxon>Betaproteobacteria</taxon>
        <taxon>Neisseriales</taxon>
        <taxon>Neisseriaceae</taxon>
        <taxon>Neisseria</taxon>
    </lineage>
</organism>
<gene>
    <name evidence="1" type="primary">argG</name>
    <name type="ordered locus">NGO_1961</name>
</gene>
<evidence type="ECO:0000255" key="1">
    <source>
        <dbReference type="HAMAP-Rule" id="MF_00581"/>
    </source>
</evidence>
<sequence length="447" mass="49688">MNQNHTILQNLPVGQKVGIAFSGGLDTSAALLWMKLKGALPYAYTANLGQPDEDDYNAIPKKAMEYGAENARLIDCRAQLAHEGIAAIQCGAFHVSTGGIAYFNTTPLGRAVTGTMLVSAMKEDDVNIWGDGSTYKGNDIERFYRYGLLTNPALKIYKPWLDQQFIDELGGRHEMSEFLIANGFNYKMSVEKAYSTDSNMLGATHEAKDLEFLNSGIKIVKPIMGVAFWDENVEIEPEEVSVRFEEGVPVALNGKEYADPVELFLEANRIGGRHGLGMSDQIENRIIEAKSRGIYEAPGMALFHIAYERLVTGIHNEDTIEQYRINGLRLGRLLYQGRWFDSQALMLRETAQRWVAKAVTGEVTLELRRGNDYSILNTESPNLTYQPERLSMEKVEGAAFTPLDRIGQLTMRNLDITDTRAKLGIYSQSGLLSLGEGSVLPQLGNKQ</sequence>
<keyword id="KW-0028">Amino-acid biosynthesis</keyword>
<keyword id="KW-0055">Arginine biosynthesis</keyword>
<keyword id="KW-0067">ATP-binding</keyword>
<keyword id="KW-0963">Cytoplasm</keyword>
<keyword id="KW-0436">Ligase</keyword>
<keyword id="KW-0547">Nucleotide-binding</keyword>
<keyword id="KW-1185">Reference proteome</keyword>
<accession>Q5F5G5</accession>
<reference key="1">
    <citation type="submission" date="2003-03" db="EMBL/GenBank/DDBJ databases">
        <title>The complete genome sequence of Neisseria gonorrhoeae.</title>
        <authorList>
            <person name="Lewis L.A."/>
            <person name="Gillaspy A.F."/>
            <person name="McLaughlin R.E."/>
            <person name="Gipson M."/>
            <person name="Ducey T.F."/>
            <person name="Ownbey T."/>
            <person name="Hartman K."/>
            <person name="Nydick C."/>
            <person name="Carson M.B."/>
            <person name="Vaughn J."/>
            <person name="Thomson C."/>
            <person name="Song L."/>
            <person name="Lin S."/>
            <person name="Yuan X."/>
            <person name="Najar F."/>
            <person name="Zhan M."/>
            <person name="Ren Q."/>
            <person name="Zhu H."/>
            <person name="Qi S."/>
            <person name="Kenton S.M."/>
            <person name="Lai H."/>
            <person name="White J.D."/>
            <person name="Clifton S."/>
            <person name="Roe B.A."/>
            <person name="Dyer D.W."/>
        </authorList>
    </citation>
    <scope>NUCLEOTIDE SEQUENCE [LARGE SCALE GENOMIC DNA]</scope>
    <source>
        <strain>ATCC 700825 / FA 1090</strain>
    </source>
</reference>
<comment type="catalytic activity">
    <reaction evidence="1">
        <text>L-citrulline + L-aspartate + ATP = 2-(N(omega)-L-arginino)succinate + AMP + diphosphate + H(+)</text>
        <dbReference type="Rhea" id="RHEA:10932"/>
        <dbReference type="ChEBI" id="CHEBI:15378"/>
        <dbReference type="ChEBI" id="CHEBI:29991"/>
        <dbReference type="ChEBI" id="CHEBI:30616"/>
        <dbReference type="ChEBI" id="CHEBI:33019"/>
        <dbReference type="ChEBI" id="CHEBI:57472"/>
        <dbReference type="ChEBI" id="CHEBI:57743"/>
        <dbReference type="ChEBI" id="CHEBI:456215"/>
        <dbReference type="EC" id="6.3.4.5"/>
    </reaction>
</comment>
<comment type="pathway">
    <text evidence="1">Amino-acid biosynthesis; L-arginine biosynthesis; L-arginine from L-ornithine and carbamoyl phosphate: step 2/3.</text>
</comment>
<comment type="subunit">
    <text evidence="1">Homotetramer.</text>
</comment>
<comment type="subcellular location">
    <subcellularLocation>
        <location evidence="1">Cytoplasm</location>
    </subcellularLocation>
</comment>
<comment type="similarity">
    <text evidence="1">Belongs to the argininosuccinate synthase family. Type 2 subfamily.</text>
</comment>
<dbReference type="EC" id="6.3.4.5" evidence="1"/>
<dbReference type="EMBL" id="AE004969">
    <property type="protein sequence ID" value="AAW90572.1"/>
    <property type="molecule type" value="Genomic_DNA"/>
</dbReference>
<dbReference type="RefSeq" id="WP_003688135.1">
    <property type="nucleotide sequence ID" value="NC_002946.2"/>
</dbReference>
<dbReference type="RefSeq" id="YP_208984.1">
    <property type="nucleotide sequence ID" value="NC_002946.2"/>
</dbReference>
<dbReference type="SMR" id="Q5F5G5"/>
<dbReference type="STRING" id="242231.NGO_1961"/>
<dbReference type="GeneID" id="66754155"/>
<dbReference type="KEGG" id="ngo:NGO_1961"/>
<dbReference type="PATRIC" id="fig|242231.10.peg.2364"/>
<dbReference type="HOGENOM" id="CLU_032784_4_1_4"/>
<dbReference type="UniPathway" id="UPA00068">
    <property type="reaction ID" value="UER00113"/>
</dbReference>
<dbReference type="Proteomes" id="UP000000535">
    <property type="component" value="Chromosome"/>
</dbReference>
<dbReference type="GO" id="GO:0005737">
    <property type="term" value="C:cytoplasm"/>
    <property type="evidence" value="ECO:0007669"/>
    <property type="project" value="UniProtKB-SubCell"/>
</dbReference>
<dbReference type="GO" id="GO:0004055">
    <property type="term" value="F:argininosuccinate synthase activity"/>
    <property type="evidence" value="ECO:0007669"/>
    <property type="project" value="UniProtKB-UniRule"/>
</dbReference>
<dbReference type="GO" id="GO:0005524">
    <property type="term" value="F:ATP binding"/>
    <property type="evidence" value="ECO:0007669"/>
    <property type="project" value="UniProtKB-UniRule"/>
</dbReference>
<dbReference type="GO" id="GO:0042803">
    <property type="term" value="F:protein homodimerization activity"/>
    <property type="evidence" value="ECO:0007669"/>
    <property type="project" value="InterPro"/>
</dbReference>
<dbReference type="GO" id="GO:0000053">
    <property type="term" value="P:argininosuccinate metabolic process"/>
    <property type="evidence" value="ECO:0007669"/>
    <property type="project" value="TreeGrafter"/>
</dbReference>
<dbReference type="GO" id="GO:0006526">
    <property type="term" value="P:L-arginine biosynthetic process"/>
    <property type="evidence" value="ECO:0007669"/>
    <property type="project" value="UniProtKB-UniRule"/>
</dbReference>
<dbReference type="GO" id="GO:0000050">
    <property type="term" value="P:urea cycle"/>
    <property type="evidence" value="ECO:0007669"/>
    <property type="project" value="TreeGrafter"/>
</dbReference>
<dbReference type="CDD" id="cd01999">
    <property type="entry name" value="ASS"/>
    <property type="match status" value="1"/>
</dbReference>
<dbReference type="FunFam" id="1.10.287.400:FF:000001">
    <property type="entry name" value="Argininosuccinate synthase"/>
    <property type="match status" value="1"/>
</dbReference>
<dbReference type="Gene3D" id="1.10.287.400">
    <property type="match status" value="1"/>
</dbReference>
<dbReference type="Gene3D" id="3.90.1260.10">
    <property type="entry name" value="Argininosuccinate synthetase, chain A, domain 2"/>
    <property type="match status" value="1"/>
</dbReference>
<dbReference type="Gene3D" id="3.40.50.620">
    <property type="entry name" value="HUPs"/>
    <property type="match status" value="1"/>
</dbReference>
<dbReference type="HAMAP" id="MF_00581">
    <property type="entry name" value="Arg_succ_synth_type2"/>
    <property type="match status" value="1"/>
</dbReference>
<dbReference type="InterPro" id="IPR023437">
    <property type="entry name" value="Arg_succ_synth_type2_subfam"/>
</dbReference>
<dbReference type="InterPro" id="IPR048268">
    <property type="entry name" value="Arginosuc_syn_C"/>
</dbReference>
<dbReference type="InterPro" id="IPR048267">
    <property type="entry name" value="Arginosuc_syn_N"/>
</dbReference>
<dbReference type="InterPro" id="IPR001518">
    <property type="entry name" value="Arginosuc_synth"/>
</dbReference>
<dbReference type="InterPro" id="IPR018223">
    <property type="entry name" value="Arginosuc_synth_CS"/>
</dbReference>
<dbReference type="InterPro" id="IPR023434">
    <property type="entry name" value="Arginosuc_synth_type_1_subfam"/>
</dbReference>
<dbReference type="InterPro" id="IPR024074">
    <property type="entry name" value="AS_cat/multimer_dom_body"/>
</dbReference>
<dbReference type="InterPro" id="IPR024073">
    <property type="entry name" value="AS_multimer_C_tail"/>
</dbReference>
<dbReference type="InterPro" id="IPR014729">
    <property type="entry name" value="Rossmann-like_a/b/a_fold"/>
</dbReference>
<dbReference type="NCBIfam" id="TIGR00032">
    <property type="entry name" value="argG"/>
    <property type="match status" value="1"/>
</dbReference>
<dbReference type="NCBIfam" id="NF003779">
    <property type="entry name" value="PRK05370.1"/>
    <property type="match status" value="1"/>
</dbReference>
<dbReference type="PANTHER" id="PTHR11587">
    <property type="entry name" value="ARGININOSUCCINATE SYNTHASE"/>
    <property type="match status" value="1"/>
</dbReference>
<dbReference type="PANTHER" id="PTHR11587:SF2">
    <property type="entry name" value="ARGININOSUCCINATE SYNTHASE"/>
    <property type="match status" value="1"/>
</dbReference>
<dbReference type="Pfam" id="PF20979">
    <property type="entry name" value="Arginosuc_syn_C"/>
    <property type="match status" value="1"/>
</dbReference>
<dbReference type="Pfam" id="PF00764">
    <property type="entry name" value="Arginosuc_synth"/>
    <property type="match status" value="1"/>
</dbReference>
<dbReference type="SUPFAM" id="SSF52402">
    <property type="entry name" value="Adenine nucleotide alpha hydrolases-like"/>
    <property type="match status" value="1"/>
</dbReference>
<dbReference type="SUPFAM" id="SSF69864">
    <property type="entry name" value="Argininosuccinate synthetase, C-terminal domain"/>
    <property type="match status" value="1"/>
</dbReference>
<dbReference type="PROSITE" id="PS00564">
    <property type="entry name" value="ARGININOSUCCIN_SYN_1"/>
    <property type="match status" value="1"/>
</dbReference>
<dbReference type="PROSITE" id="PS00565">
    <property type="entry name" value="ARGININOSUCCIN_SYN_2"/>
    <property type="match status" value="1"/>
</dbReference>
<protein>
    <recommendedName>
        <fullName evidence="1">Argininosuccinate synthase</fullName>
        <ecNumber evidence="1">6.3.4.5</ecNumber>
    </recommendedName>
    <alternativeName>
        <fullName evidence="1">Citrulline--aspartate ligase</fullName>
    </alternativeName>
</protein>
<name>ASSY_NEIG1</name>
<proteinExistence type="inferred from homology"/>
<feature type="chain" id="PRO_1000025433" description="Argininosuccinate synthase">
    <location>
        <begin position="1"/>
        <end position="447"/>
    </location>
</feature>
<feature type="binding site" evidence="1">
    <location>
        <begin position="20"/>
        <end position="28"/>
    </location>
    <ligand>
        <name>ATP</name>
        <dbReference type="ChEBI" id="CHEBI:30616"/>
    </ligand>
</feature>
<feature type="binding site" evidence="1">
    <location>
        <position position="46"/>
    </location>
    <ligand>
        <name>ATP</name>
        <dbReference type="ChEBI" id="CHEBI:30616"/>
    </ligand>
</feature>
<feature type="binding site" evidence="1">
    <location>
        <position position="102"/>
    </location>
    <ligand>
        <name>L-citrulline</name>
        <dbReference type="ChEBI" id="CHEBI:57743"/>
    </ligand>
</feature>
<feature type="binding site" evidence="1">
    <location>
        <position position="132"/>
    </location>
    <ligand>
        <name>ATP</name>
        <dbReference type="ChEBI" id="CHEBI:30616"/>
    </ligand>
</feature>
<feature type="binding site" evidence="1">
    <location>
        <position position="134"/>
    </location>
    <ligand>
        <name>ATP</name>
        <dbReference type="ChEBI" id="CHEBI:30616"/>
    </ligand>
</feature>
<feature type="binding site" evidence="1">
    <location>
        <position position="134"/>
    </location>
    <ligand>
        <name>L-aspartate</name>
        <dbReference type="ChEBI" id="CHEBI:29991"/>
    </ligand>
</feature>
<feature type="binding site" evidence="1">
    <location>
        <position position="138"/>
    </location>
    <ligand>
        <name>L-aspartate</name>
        <dbReference type="ChEBI" id="CHEBI:29991"/>
    </ligand>
</feature>
<feature type="binding site" evidence="1">
    <location>
        <position position="138"/>
    </location>
    <ligand>
        <name>L-citrulline</name>
        <dbReference type="ChEBI" id="CHEBI:57743"/>
    </ligand>
</feature>
<feature type="binding site" evidence="1">
    <location>
        <position position="139"/>
    </location>
    <ligand>
        <name>ATP</name>
        <dbReference type="ChEBI" id="CHEBI:30616"/>
    </ligand>
</feature>
<feature type="binding site" evidence="1">
    <location>
        <position position="139"/>
    </location>
    <ligand>
        <name>L-aspartate</name>
        <dbReference type="ChEBI" id="CHEBI:29991"/>
    </ligand>
</feature>
<feature type="binding site" evidence="1">
    <location>
        <position position="142"/>
    </location>
    <ligand>
        <name>L-citrulline</name>
        <dbReference type="ChEBI" id="CHEBI:57743"/>
    </ligand>
</feature>
<feature type="binding site" evidence="1">
    <location>
        <position position="195"/>
    </location>
    <ligand>
        <name>L-citrulline</name>
        <dbReference type="ChEBI" id="CHEBI:57743"/>
    </ligand>
</feature>
<feature type="binding site" evidence="1">
    <location>
        <position position="197"/>
    </location>
    <ligand>
        <name>ATP</name>
        <dbReference type="ChEBI" id="CHEBI:30616"/>
    </ligand>
</feature>
<feature type="binding site" evidence="1">
    <location>
        <position position="204"/>
    </location>
    <ligand>
        <name>L-citrulline</name>
        <dbReference type="ChEBI" id="CHEBI:57743"/>
    </ligand>
</feature>
<feature type="binding site" evidence="1">
    <location>
        <position position="206"/>
    </location>
    <ligand>
        <name>L-citrulline</name>
        <dbReference type="ChEBI" id="CHEBI:57743"/>
    </ligand>
</feature>
<feature type="binding site" evidence="1">
    <location>
        <position position="283"/>
    </location>
    <ligand>
        <name>L-citrulline</name>
        <dbReference type="ChEBI" id="CHEBI:57743"/>
    </ligand>
</feature>